<organism>
    <name type="scientific">Streptococcus gordonii (strain Challis / ATCC 35105 / BCRC 15272 / CH1 / DL1 / V288)</name>
    <dbReference type="NCBI Taxonomy" id="467705"/>
    <lineage>
        <taxon>Bacteria</taxon>
        <taxon>Bacillati</taxon>
        <taxon>Bacillota</taxon>
        <taxon>Bacilli</taxon>
        <taxon>Lactobacillales</taxon>
        <taxon>Streptococcaceae</taxon>
        <taxon>Streptococcus</taxon>
    </lineage>
</organism>
<gene>
    <name evidence="1" type="primary">rplT</name>
    <name type="ordered locus">SGO_1034</name>
</gene>
<keyword id="KW-1185">Reference proteome</keyword>
<keyword id="KW-0687">Ribonucleoprotein</keyword>
<keyword id="KW-0689">Ribosomal protein</keyword>
<keyword id="KW-0694">RNA-binding</keyword>
<keyword id="KW-0699">rRNA-binding</keyword>
<reference key="1">
    <citation type="journal article" date="2007" name="J. Bacteriol.">
        <title>Genome-wide transcriptional changes in Streptococcus gordonii in response to competence signaling peptide.</title>
        <authorList>
            <person name="Vickerman M.M."/>
            <person name="Iobst S."/>
            <person name="Jesionowski A.M."/>
            <person name="Gill S.R."/>
        </authorList>
    </citation>
    <scope>NUCLEOTIDE SEQUENCE [LARGE SCALE GENOMIC DNA]</scope>
    <source>
        <strain>Challis / ATCC 35105 / BCRC 15272 / CH1 / DL1 / V288</strain>
    </source>
</reference>
<dbReference type="EMBL" id="CP000725">
    <property type="protein sequence ID" value="ABV09203.1"/>
    <property type="molecule type" value="Genomic_DNA"/>
</dbReference>
<dbReference type="RefSeq" id="WP_012000448.1">
    <property type="nucleotide sequence ID" value="NC_009785.1"/>
</dbReference>
<dbReference type="SMR" id="A8AX13"/>
<dbReference type="STRING" id="467705.SGO_1034"/>
<dbReference type="KEGG" id="sgo:SGO_1034"/>
<dbReference type="eggNOG" id="COG0292">
    <property type="taxonomic scope" value="Bacteria"/>
</dbReference>
<dbReference type="HOGENOM" id="CLU_123265_0_1_9"/>
<dbReference type="Proteomes" id="UP000001131">
    <property type="component" value="Chromosome"/>
</dbReference>
<dbReference type="GO" id="GO:1990904">
    <property type="term" value="C:ribonucleoprotein complex"/>
    <property type="evidence" value="ECO:0007669"/>
    <property type="project" value="UniProtKB-KW"/>
</dbReference>
<dbReference type="GO" id="GO:0005840">
    <property type="term" value="C:ribosome"/>
    <property type="evidence" value="ECO:0007669"/>
    <property type="project" value="UniProtKB-KW"/>
</dbReference>
<dbReference type="GO" id="GO:0019843">
    <property type="term" value="F:rRNA binding"/>
    <property type="evidence" value="ECO:0007669"/>
    <property type="project" value="UniProtKB-UniRule"/>
</dbReference>
<dbReference type="GO" id="GO:0003735">
    <property type="term" value="F:structural constituent of ribosome"/>
    <property type="evidence" value="ECO:0007669"/>
    <property type="project" value="InterPro"/>
</dbReference>
<dbReference type="GO" id="GO:0000027">
    <property type="term" value="P:ribosomal large subunit assembly"/>
    <property type="evidence" value="ECO:0007669"/>
    <property type="project" value="UniProtKB-UniRule"/>
</dbReference>
<dbReference type="GO" id="GO:0006412">
    <property type="term" value="P:translation"/>
    <property type="evidence" value="ECO:0007669"/>
    <property type="project" value="InterPro"/>
</dbReference>
<dbReference type="CDD" id="cd07026">
    <property type="entry name" value="Ribosomal_L20"/>
    <property type="match status" value="1"/>
</dbReference>
<dbReference type="FunFam" id="1.10.1900.20:FF:000001">
    <property type="entry name" value="50S ribosomal protein L20"/>
    <property type="match status" value="1"/>
</dbReference>
<dbReference type="Gene3D" id="6.10.160.10">
    <property type="match status" value="1"/>
</dbReference>
<dbReference type="Gene3D" id="1.10.1900.20">
    <property type="entry name" value="Ribosomal protein L20"/>
    <property type="match status" value="1"/>
</dbReference>
<dbReference type="HAMAP" id="MF_00382">
    <property type="entry name" value="Ribosomal_bL20"/>
    <property type="match status" value="1"/>
</dbReference>
<dbReference type="InterPro" id="IPR005813">
    <property type="entry name" value="Ribosomal_bL20"/>
</dbReference>
<dbReference type="InterPro" id="IPR049946">
    <property type="entry name" value="RIBOSOMAL_L20_CS"/>
</dbReference>
<dbReference type="InterPro" id="IPR035566">
    <property type="entry name" value="Ribosomal_protein_bL20_C"/>
</dbReference>
<dbReference type="NCBIfam" id="TIGR01032">
    <property type="entry name" value="rplT_bact"/>
    <property type="match status" value="1"/>
</dbReference>
<dbReference type="PANTHER" id="PTHR10986">
    <property type="entry name" value="39S RIBOSOMAL PROTEIN L20"/>
    <property type="match status" value="1"/>
</dbReference>
<dbReference type="Pfam" id="PF00453">
    <property type="entry name" value="Ribosomal_L20"/>
    <property type="match status" value="1"/>
</dbReference>
<dbReference type="PRINTS" id="PR00062">
    <property type="entry name" value="RIBOSOMALL20"/>
</dbReference>
<dbReference type="SUPFAM" id="SSF74731">
    <property type="entry name" value="Ribosomal protein L20"/>
    <property type="match status" value="1"/>
</dbReference>
<dbReference type="PROSITE" id="PS00937">
    <property type="entry name" value="RIBOSOMAL_L20"/>
    <property type="match status" value="1"/>
</dbReference>
<comment type="function">
    <text evidence="1">Binds directly to 23S ribosomal RNA and is necessary for the in vitro assembly process of the 50S ribosomal subunit. It is not involved in the protein synthesizing functions of that subunit.</text>
</comment>
<comment type="similarity">
    <text evidence="1">Belongs to the bacterial ribosomal protein bL20 family.</text>
</comment>
<feature type="chain" id="PRO_1000080101" description="Large ribosomal subunit protein bL20">
    <location>
        <begin position="1"/>
        <end position="119"/>
    </location>
</feature>
<name>RL20_STRGC</name>
<sequence>MARVKGGVVSRKRRKRILKLAKGYYGAKHILFRTAKEQVMNSYYYAYRDRRQKKRDFRKLWITRINAAARLNGLSYSQLMHGLKLAEIEVNRKMLADLAVNDATAFTALADAAKAKLGK</sequence>
<evidence type="ECO:0000255" key="1">
    <source>
        <dbReference type="HAMAP-Rule" id="MF_00382"/>
    </source>
</evidence>
<evidence type="ECO:0000305" key="2"/>
<proteinExistence type="inferred from homology"/>
<protein>
    <recommendedName>
        <fullName evidence="1">Large ribosomal subunit protein bL20</fullName>
    </recommendedName>
    <alternativeName>
        <fullName evidence="2">50S ribosomal protein L20</fullName>
    </alternativeName>
</protein>
<accession>A8AX13</accession>